<proteinExistence type="inferred from homology"/>
<reference key="1">
    <citation type="submission" date="2007-07" db="EMBL/GenBank/DDBJ databases">
        <title>Complete sequence of chromosome of Xanthobacter autotrophicus Py2.</title>
        <authorList>
            <consortium name="US DOE Joint Genome Institute"/>
            <person name="Copeland A."/>
            <person name="Lucas S."/>
            <person name="Lapidus A."/>
            <person name="Barry K."/>
            <person name="Glavina del Rio T."/>
            <person name="Hammon N."/>
            <person name="Israni S."/>
            <person name="Dalin E."/>
            <person name="Tice H."/>
            <person name="Pitluck S."/>
            <person name="Sims D."/>
            <person name="Brettin T."/>
            <person name="Bruce D."/>
            <person name="Detter J.C."/>
            <person name="Han C."/>
            <person name="Tapia R."/>
            <person name="Brainard J."/>
            <person name="Schmutz J."/>
            <person name="Larimer F."/>
            <person name="Land M."/>
            <person name="Hauser L."/>
            <person name="Kyrpides N."/>
            <person name="Kim E."/>
            <person name="Ensigns S.A."/>
            <person name="Richardson P."/>
        </authorList>
    </citation>
    <scope>NUCLEOTIDE SEQUENCE [LARGE SCALE GENOMIC DNA]</scope>
    <source>
        <strain>ATCC BAA-1158 / Py2</strain>
    </source>
</reference>
<accession>A7IEB7</accession>
<keyword id="KW-0067">ATP-binding</keyword>
<keyword id="KW-0963">Cytoplasm</keyword>
<keyword id="KW-0418">Kinase</keyword>
<keyword id="KW-0547">Nucleotide-binding</keyword>
<keyword id="KW-1185">Reference proteome</keyword>
<keyword id="KW-0808">Transferase</keyword>
<name>KCY_XANP2</name>
<dbReference type="EC" id="2.7.4.25" evidence="1"/>
<dbReference type="EMBL" id="CP000781">
    <property type="protein sequence ID" value="ABS66360.1"/>
    <property type="molecule type" value="Genomic_DNA"/>
</dbReference>
<dbReference type="SMR" id="A7IEB7"/>
<dbReference type="STRING" id="78245.Xaut_1111"/>
<dbReference type="KEGG" id="xau:Xaut_1111"/>
<dbReference type="eggNOG" id="COG0283">
    <property type="taxonomic scope" value="Bacteria"/>
</dbReference>
<dbReference type="HOGENOM" id="CLU_079959_0_1_5"/>
<dbReference type="OrthoDB" id="9807434at2"/>
<dbReference type="PhylomeDB" id="A7IEB7"/>
<dbReference type="Proteomes" id="UP000002417">
    <property type="component" value="Chromosome"/>
</dbReference>
<dbReference type="GO" id="GO:0005737">
    <property type="term" value="C:cytoplasm"/>
    <property type="evidence" value="ECO:0007669"/>
    <property type="project" value="UniProtKB-SubCell"/>
</dbReference>
<dbReference type="GO" id="GO:0005524">
    <property type="term" value="F:ATP binding"/>
    <property type="evidence" value="ECO:0007669"/>
    <property type="project" value="UniProtKB-UniRule"/>
</dbReference>
<dbReference type="GO" id="GO:0036430">
    <property type="term" value="F:CMP kinase activity"/>
    <property type="evidence" value="ECO:0007669"/>
    <property type="project" value="RHEA"/>
</dbReference>
<dbReference type="GO" id="GO:0036431">
    <property type="term" value="F:dCMP kinase activity"/>
    <property type="evidence" value="ECO:0007669"/>
    <property type="project" value="RHEA"/>
</dbReference>
<dbReference type="GO" id="GO:0006220">
    <property type="term" value="P:pyrimidine nucleotide metabolic process"/>
    <property type="evidence" value="ECO:0007669"/>
    <property type="project" value="UniProtKB-UniRule"/>
</dbReference>
<dbReference type="CDD" id="cd02020">
    <property type="entry name" value="CMPK"/>
    <property type="match status" value="1"/>
</dbReference>
<dbReference type="Gene3D" id="3.40.50.300">
    <property type="entry name" value="P-loop containing nucleotide triphosphate hydrolases"/>
    <property type="match status" value="1"/>
</dbReference>
<dbReference type="HAMAP" id="MF_00238">
    <property type="entry name" value="Cytidyl_kinase_type1"/>
    <property type="match status" value="1"/>
</dbReference>
<dbReference type="InterPro" id="IPR003136">
    <property type="entry name" value="Cytidylate_kin"/>
</dbReference>
<dbReference type="InterPro" id="IPR011994">
    <property type="entry name" value="Cytidylate_kinase_dom"/>
</dbReference>
<dbReference type="InterPro" id="IPR027417">
    <property type="entry name" value="P-loop_NTPase"/>
</dbReference>
<dbReference type="NCBIfam" id="TIGR00017">
    <property type="entry name" value="cmk"/>
    <property type="match status" value="1"/>
</dbReference>
<dbReference type="Pfam" id="PF02224">
    <property type="entry name" value="Cytidylate_kin"/>
    <property type="match status" value="1"/>
</dbReference>
<dbReference type="SUPFAM" id="SSF52540">
    <property type="entry name" value="P-loop containing nucleoside triphosphate hydrolases"/>
    <property type="match status" value="1"/>
</dbReference>
<comment type="catalytic activity">
    <reaction evidence="1">
        <text>CMP + ATP = CDP + ADP</text>
        <dbReference type="Rhea" id="RHEA:11600"/>
        <dbReference type="ChEBI" id="CHEBI:30616"/>
        <dbReference type="ChEBI" id="CHEBI:58069"/>
        <dbReference type="ChEBI" id="CHEBI:60377"/>
        <dbReference type="ChEBI" id="CHEBI:456216"/>
        <dbReference type="EC" id="2.7.4.25"/>
    </reaction>
</comment>
<comment type="catalytic activity">
    <reaction evidence="1">
        <text>dCMP + ATP = dCDP + ADP</text>
        <dbReference type="Rhea" id="RHEA:25094"/>
        <dbReference type="ChEBI" id="CHEBI:30616"/>
        <dbReference type="ChEBI" id="CHEBI:57566"/>
        <dbReference type="ChEBI" id="CHEBI:58593"/>
        <dbReference type="ChEBI" id="CHEBI:456216"/>
        <dbReference type="EC" id="2.7.4.25"/>
    </reaction>
</comment>
<comment type="subcellular location">
    <subcellularLocation>
        <location evidence="1">Cytoplasm</location>
    </subcellularLocation>
</comment>
<comment type="similarity">
    <text evidence="1">Belongs to the cytidylate kinase family. Type 1 subfamily.</text>
</comment>
<gene>
    <name evidence="1" type="primary">cmk</name>
    <name type="ordered locus">Xaut_1111</name>
</gene>
<protein>
    <recommendedName>
        <fullName evidence="1">Cytidylate kinase</fullName>
        <shortName evidence="1">CK</shortName>
        <ecNumber evidence="1">2.7.4.25</ecNumber>
    </recommendedName>
    <alternativeName>
        <fullName evidence="1">Cytidine monophosphate kinase</fullName>
        <shortName evidence="1">CMP kinase</shortName>
    </alternativeName>
</protein>
<organism>
    <name type="scientific">Xanthobacter autotrophicus (strain ATCC BAA-1158 / Py2)</name>
    <dbReference type="NCBI Taxonomy" id="78245"/>
    <lineage>
        <taxon>Bacteria</taxon>
        <taxon>Pseudomonadati</taxon>
        <taxon>Pseudomonadota</taxon>
        <taxon>Alphaproteobacteria</taxon>
        <taxon>Hyphomicrobiales</taxon>
        <taxon>Xanthobacteraceae</taxon>
        <taxon>Xanthobacter</taxon>
    </lineage>
</organism>
<sequence length="208" mass="21738">MVIAIDGPAASGKGTLARRLAAYYGLPHLDTGLLYRAVGAIVLAQGQLQDEAASVEAARTLDVATLDPEALRTAELGEAASVVAARGGVRAALLDLQHRFAAQPGGAVLDGRDIGTVICPKAQAKLFVTASPEVRAERRHRELIGRGEDVAYETVLADIRKRDERDSARAAAPLVQADDAVLLDTSALDIAQAFAAALAIVEARRAGR</sequence>
<feature type="chain" id="PRO_1000100702" description="Cytidylate kinase">
    <location>
        <begin position="1"/>
        <end position="208"/>
    </location>
</feature>
<feature type="binding site" evidence="1">
    <location>
        <begin position="7"/>
        <end position="15"/>
    </location>
    <ligand>
        <name>ATP</name>
        <dbReference type="ChEBI" id="CHEBI:30616"/>
    </ligand>
</feature>
<evidence type="ECO:0000255" key="1">
    <source>
        <dbReference type="HAMAP-Rule" id="MF_00238"/>
    </source>
</evidence>